<proteinExistence type="inferred from homology"/>
<keyword id="KW-0012">Acyltransferase</keyword>
<keyword id="KW-0997">Cell inner membrane</keyword>
<keyword id="KW-1003">Cell membrane</keyword>
<keyword id="KW-0444">Lipid biosynthesis</keyword>
<keyword id="KW-0443">Lipid metabolism</keyword>
<keyword id="KW-0472">Membrane</keyword>
<keyword id="KW-0594">Phospholipid biosynthesis</keyword>
<keyword id="KW-1208">Phospholipid metabolism</keyword>
<keyword id="KW-1185">Reference proteome</keyword>
<keyword id="KW-0808">Transferase</keyword>
<name>PLSB_SHELP</name>
<dbReference type="EC" id="2.3.1.15" evidence="1"/>
<dbReference type="EMBL" id="CP000606">
    <property type="protein sequence ID" value="ABO25396.1"/>
    <property type="molecule type" value="Genomic_DNA"/>
</dbReference>
<dbReference type="RefSeq" id="WP_011867325.1">
    <property type="nucleotide sequence ID" value="NC_009092.1"/>
</dbReference>
<dbReference type="SMR" id="A3QIU8"/>
<dbReference type="STRING" id="323850.Shew_3530"/>
<dbReference type="KEGG" id="slo:Shew_3530"/>
<dbReference type="eggNOG" id="COG2937">
    <property type="taxonomic scope" value="Bacteria"/>
</dbReference>
<dbReference type="HOGENOM" id="CLU_015407_0_0_6"/>
<dbReference type="OrthoDB" id="335193at2"/>
<dbReference type="UniPathway" id="UPA00557">
    <property type="reaction ID" value="UER00612"/>
</dbReference>
<dbReference type="Proteomes" id="UP000001558">
    <property type="component" value="Chromosome"/>
</dbReference>
<dbReference type="GO" id="GO:0005886">
    <property type="term" value="C:plasma membrane"/>
    <property type="evidence" value="ECO:0007669"/>
    <property type="project" value="UniProtKB-SubCell"/>
</dbReference>
<dbReference type="GO" id="GO:0004366">
    <property type="term" value="F:glycerol-3-phosphate O-acyltransferase activity"/>
    <property type="evidence" value="ECO:0007669"/>
    <property type="project" value="UniProtKB-UniRule"/>
</dbReference>
<dbReference type="GO" id="GO:0016024">
    <property type="term" value="P:CDP-diacylglycerol biosynthetic process"/>
    <property type="evidence" value="ECO:0007669"/>
    <property type="project" value="UniProtKB-UniRule"/>
</dbReference>
<dbReference type="GO" id="GO:0006631">
    <property type="term" value="P:fatty acid metabolic process"/>
    <property type="evidence" value="ECO:0007669"/>
    <property type="project" value="TreeGrafter"/>
</dbReference>
<dbReference type="CDD" id="cd07993">
    <property type="entry name" value="LPLAT_DHAPAT-like"/>
    <property type="match status" value="1"/>
</dbReference>
<dbReference type="HAMAP" id="MF_00393">
    <property type="entry name" value="Glyc3P_acyltrans"/>
    <property type="match status" value="1"/>
</dbReference>
<dbReference type="InterPro" id="IPR022284">
    <property type="entry name" value="GPAT/DHAPAT"/>
</dbReference>
<dbReference type="InterPro" id="IPR045520">
    <property type="entry name" value="GPAT/DHAPAT_C"/>
</dbReference>
<dbReference type="InterPro" id="IPR041728">
    <property type="entry name" value="GPAT/DHAPAT_LPLAT"/>
</dbReference>
<dbReference type="InterPro" id="IPR028354">
    <property type="entry name" value="GPAT_PlsB"/>
</dbReference>
<dbReference type="InterPro" id="IPR002123">
    <property type="entry name" value="Plipid/glycerol_acylTrfase"/>
</dbReference>
<dbReference type="NCBIfam" id="TIGR03703">
    <property type="entry name" value="plsB"/>
    <property type="match status" value="1"/>
</dbReference>
<dbReference type="NCBIfam" id="NF003441">
    <property type="entry name" value="PRK04974.1"/>
    <property type="match status" value="1"/>
</dbReference>
<dbReference type="PANTHER" id="PTHR12563:SF17">
    <property type="entry name" value="DIHYDROXYACETONE PHOSPHATE ACYLTRANSFERASE"/>
    <property type="match status" value="1"/>
</dbReference>
<dbReference type="PANTHER" id="PTHR12563">
    <property type="entry name" value="GLYCEROL-3-PHOSPHATE ACYLTRANSFERASE"/>
    <property type="match status" value="1"/>
</dbReference>
<dbReference type="Pfam" id="PF01553">
    <property type="entry name" value="Acyltransferase"/>
    <property type="match status" value="1"/>
</dbReference>
<dbReference type="Pfam" id="PF19277">
    <property type="entry name" value="GPAT_C"/>
    <property type="match status" value="1"/>
</dbReference>
<dbReference type="PIRSF" id="PIRSF500064">
    <property type="entry name" value="GPAT"/>
    <property type="match status" value="1"/>
</dbReference>
<dbReference type="PIRSF" id="PIRSF000437">
    <property type="entry name" value="GPAT_DHAPAT"/>
    <property type="match status" value="1"/>
</dbReference>
<dbReference type="SMART" id="SM00563">
    <property type="entry name" value="PlsC"/>
    <property type="match status" value="1"/>
</dbReference>
<dbReference type="SUPFAM" id="SSF69593">
    <property type="entry name" value="Glycerol-3-phosphate (1)-acyltransferase"/>
    <property type="match status" value="1"/>
</dbReference>
<protein>
    <recommendedName>
        <fullName evidence="1">Glycerol-3-phosphate acyltransferase</fullName>
        <shortName evidence="1">GPAT</shortName>
        <ecNumber evidence="1">2.3.1.15</ecNumber>
    </recommendedName>
</protein>
<organism>
    <name type="scientific">Shewanella loihica (strain ATCC BAA-1088 / PV-4)</name>
    <dbReference type="NCBI Taxonomy" id="323850"/>
    <lineage>
        <taxon>Bacteria</taxon>
        <taxon>Pseudomonadati</taxon>
        <taxon>Pseudomonadota</taxon>
        <taxon>Gammaproteobacteria</taxon>
        <taxon>Alteromonadales</taxon>
        <taxon>Shewanellaceae</taxon>
        <taxon>Shewanella</taxon>
    </lineage>
</organism>
<evidence type="ECO:0000255" key="1">
    <source>
        <dbReference type="HAMAP-Rule" id="MF_00393"/>
    </source>
</evidence>
<gene>
    <name evidence="1" type="primary">plsB</name>
    <name type="ordered locus">Shew_3530</name>
</gene>
<accession>A3QIU8</accession>
<sequence length="807" mass="91491">MSKQDSLWFKSLRWIQKKLVHTIVVPQDPFADLNLDSDRPLVYVMKTESISDIAALSEVTDRLGLPSPYQPLDVEGEQAPRVVCVEGAKPLLGEREGNEFYLESFSRLLSAHKKHPELDIQLVPVSLYWGRTPGKEDDSMKAAVLERESPTWLRKCLMIIFLGRHNFVQFSNAMSLRYMADEHGTDKRIAQKLARVARVHFSRQRKVMTGPVLPNRQNLFHALLKSESMKKAILEEAQSKKISEAKARETAMEYLDEIAADYSDSLVRIAERFLTWLWNKLYKGINIKGAEQIRQLHHDGHEIVYVPCHRSHMDYLLLSYILYYQGMVPPHIAAGINLNFWPAGPMFRRGGAFFIRRSFRGNKLYTAVFREYLDQLFAKGYSVEYFTEGGRSRTGRLLAPKTGMIAMTLNSVLRGVERPVTLVPVYLGYDHVMEVATYHKELSGKKKQKESVWQVFGAIRKLGNFGQGYVNFGEPITLHSYLNEQVPEWREELAQDPEQKPSWLTPVVNTLANRVMTRINDAAAVSSITLTSLVLLASEQNALQRSQLEKQLDLYLSLLKSVPYTGYTSVVEGDGAKLIAQGLELKKLKLDSDPLGDIISIDESLAIAMTYYRNNIIHLLVIPSLIASCLTRQDECSRDEIIATVKDFYPLLQAELFMGIDNLETYVNQLLDQLLAEGLIDEDKHFSVKPDGLNQLLLLAGTISETMQRYAIIFNLLAASPKIERSELESDSHQLAQRLGALHGITAPEFYDKKLYGTLSVKLKELGYLADDSHSEDVQRIRTRANSLLRSSVRQTIVDSVAAEHQA</sequence>
<feature type="chain" id="PRO_1000049458" description="Glycerol-3-phosphate acyltransferase">
    <location>
        <begin position="1"/>
        <end position="807"/>
    </location>
</feature>
<feature type="short sequence motif" description="HXXXXD motif">
    <location>
        <begin position="308"/>
        <end position="313"/>
    </location>
</feature>
<reference key="1">
    <citation type="submission" date="2007-03" db="EMBL/GenBank/DDBJ databases">
        <title>Complete sequence of Shewanella loihica PV-4.</title>
        <authorList>
            <consortium name="US DOE Joint Genome Institute"/>
            <person name="Copeland A."/>
            <person name="Lucas S."/>
            <person name="Lapidus A."/>
            <person name="Barry K."/>
            <person name="Detter J.C."/>
            <person name="Glavina del Rio T."/>
            <person name="Hammon N."/>
            <person name="Israni S."/>
            <person name="Dalin E."/>
            <person name="Tice H."/>
            <person name="Pitluck S."/>
            <person name="Chain P."/>
            <person name="Malfatti S."/>
            <person name="Shin M."/>
            <person name="Vergez L."/>
            <person name="Schmutz J."/>
            <person name="Larimer F."/>
            <person name="Land M."/>
            <person name="Hauser L."/>
            <person name="Kyrpides N."/>
            <person name="Mikhailova N."/>
            <person name="Romine M.F."/>
            <person name="Serres G."/>
            <person name="Fredrickson J."/>
            <person name="Tiedje J."/>
            <person name="Richardson P."/>
        </authorList>
    </citation>
    <scope>NUCLEOTIDE SEQUENCE [LARGE SCALE GENOMIC DNA]</scope>
    <source>
        <strain>ATCC BAA-1088 / PV-4</strain>
    </source>
</reference>
<comment type="catalytic activity">
    <reaction evidence="1">
        <text>sn-glycerol 3-phosphate + an acyl-CoA = a 1-acyl-sn-glycero-3-phosphate + CoA</text>
        <dbReference type="Rhea" id="RHEA:15325"/>
        <dbReference type="ChEBI" id="CHEBI:57287"/>
        <dbReference type="ChEBI" id="CHEBI:57597"/>
        <dbReference type="ChEBI" id="CHEBI:57970"/>
        <dbReference type="ChEBI" id="CHEBI:58342"/>
        <dbReference type="EC" id="2.3.1.15"/>
    </reaction>
</comment>
<comment type="pathway">
    <text evidence="1">Phospholipid metabolism; CDP-diacylglycerol biosynthesis; CDP-diacylglycerol from sn-glycerol 3-phosphate: step 1/3.</text>
</comment>
<comment type="subcellular location">
    <subcellularLocation>
        <location evidence="1">Cell inner membrane</location>
        <topology evidence="1">Peripheral membrane protein</topology>
        <orientation evidence="1">Cytoplasmic side</orientation>
    </subcellularLocation>
</comment>
<comment type="domain">
    <text evidence="1">The HXXXXD motif is essential for acyltransferase activity and may constitute the binding site for the phosphate moiety of the glycerol-3-phosphate.</text>
</comment>
<comment type="similarity">
    <text evidence="1">Belongs to the GPAT/DAPAT family.</text>
</comment>